<evidence type="ECO:0000255" key="1">
    <source>
        <dbReference type="HAMAP-Rule" id="MF_01621"/>
    </source>
</evidence>
<evidence type="ECO:0000256" key="2">
    <source>
        <dbReference type="SAM" id="MobiDB-lite"/>
    </source>
</evidence>
<dbReference type="EC" id="4.2.1.17" evidence="1"/>
<dbReference type="EC" id="5.1.2.3" evidence="1"/>
<dbReference type="EC" id="5.3.3.8" evidence="1"/>
<dbReference type="EC" id="1.1.1.35" evidence="1"/>
<dbReference type="EMBL" id="CP001164">
    <property type="protein sequence ID" value="ACI37922.1"/>
    <property type="molecule type" value="Genomic_DNA"/>
</dbReference>
<dbReference type="RefSeq" id="WP_000965903.1">
    <property type="nucleotide sequence ID" value="NC_011353.1"/>
</dbReference>
<dbReference type="SMR" id="B5YY93"/>
<dbReference type="KEGG" id="ecf:ECH74115_5285"/>
<dbReference type="HOGENOM" id="CLU_009834_16_3_6"/>
<dbReference type="UniPathway" id="UPA00659"/>
<dbReference type="GO" id="GO:0036125">
    <property type="term" value="C:fatty acid beta-oxidation multienzyme complex"/>
    <property type="evidence" value="ECO:0007669"/>
    <property type="project" value="InterPro"/>
</dbReference>
<dbReference type="GO" id="GO:0008692">
    <property type="term" value="F:3-hydroxybutyryl-CoA epimerase activity"/>
    <property type="evidence" value="ECO:0007669"/>
    <property type="project" value="UniProtKB-UniRule"/>
</dbReference>
<dbReference type="GO" id="GO:0004165">
    <property type="term" value="F:delta(3)-delta(2)-enoyl-CoA isomerase activity"/>
    <property type="evidence" value="ECO:0007669"/>
    <property type="project" value="UniProtKB-UniRule"/>
</dbReference>
<dbReference type="GO" id="GO:0004300">
    <property type="term" value="F:enoyl-CoA hydratase activity"/>
    <property type="evidence" value="ECO:0007669"/>
    <property type="project" value="UniProtKB-UniRule"/>
</dbReference>
<dbReference type="GO" id="GO:0016509">
    <property type="term" value="F:long-chain-3-hydroxyacyl-CoA dehydrogenase activity"/>
    <property type="evidence" value="ECO:0007669"/>
    <property type="project" value="TreeGrafter"/>
</dbReference>
<dbReference type="GO" id="GO:0070403">
    <property type="term" value="F:NAD+ binding"/>
    <property type="evidence" value="ECO:0007669"/>
    <property type="project" value="InterPro"/>
</dbReference>
<dbReference type="GO" id="GO:0006635">
    <property type="term" value="P:fatty acid beta-oxidation"/>
    <property type="evidence" value="ECO:0007669"/>
    <property type="project" value="UniProtKB-UniRule"/>
</dbReference>
<dbReference type="CDD" id="cd06558">
    <property type="entry name" value="crotonase-like"/>
    <property type="match status" value="1"/>
</dbReference>
<dbReference type="FunFam" id="1.10.1040.50:FF:000001">
    <property type="entry name" value="Fatty acid oxidation complex subunit alpha"/>
    <property type="match status" value="1"/>
</dbReference>
<dbReference type="FunFam" id="3.90.226.10:FF:000018">
    <property type="entry name" value="Fatty acid oxidation complex subunit alpha"/>
    <property type="match status" value="1"/>
</dbReference>
<dbReference type="FunFam" id="3.40.50.720:FF:000009">
    <property type="entry name" value="Fatty oxidation complex, alpha subunit"/>
    <property type="match status" value="1"/>
</dbReference>
<dbReference type="Gene3D" id="1.10.1040.50">
    <property type="match status" value="1"/>
</dbReference>
<dbReference type="Gene3D" id="3.90.226.10">
    <property type="entry name" value="2-enoyl-CoA Hydratase, Chain A, domain 1"/>
    <property type="match status" value="1"/>
</dbReference>
<dbReference type="Gene3D" id="3.40.50.720">
    <property type="entry name" value="NAD(P)-binding Rossmann-like Domain"/>
    <property type="match status" value="1"/>
</dbReference>
<dbReference type="HAMAP" id="MF_01621">
    <property type="entry name" value="FadB"/>
    <property type="match status" value="1"/>
</dbReference>
<dbReference type="InterPro" id="IPR006180">
    <property type="entry name" value="3-OHacyl-CoA_DH_CS"/>
</dbReference>
<dbReference type="InterPro" id="IPR006176">
    <property type="entry name" value="3-OHacyl-CoA_DH_NAD-bd"/>
</dbReference>
<dbReference type="InterPro" id="IPR006108">
    <property type="entry name" value="3HC_DH_C"/>
</dbReference>
<dbReference type="InterPro" id="IPR008927">
    <property type="entry name" value="6-PGluconate_DH-like_C_sf"/>
</dbReference>
<dbReference type="InterPro" id="IPR029045">
    <property type="entry name" value="ClpP/crotonase-like_dom_sf"/>
</dbReference>
<dbReference type="InterPro" id="IPR018376">
    <property type="entry name" value="Enoyl-CoA_hyd/isom_CS"/>
</dbReference>
<dbReference type="InterPro" id="IPR001753">
    <property type="entry name" value="Enoyl-CoA_hydra/iso"/>
</dbReference>
<dbReference type="InterPro" id="IPR050136">
    <property type="entry name" value="FA_oxidation_alpha_subunit"/>
</dbReference>
<dbReference type="InterPro" id="IPR012799">
    <property type="entry name" value="FadB"/>
</dbReference>
<dbReference type="InterPro" id="IPR036291">
    <property type="entry name" value="NAD(P)-bd_dom_sf"/>
</dbReference>
<dbReference type="NCBIfam" id="TIGR02437">
    <property type="entry name" value="FadB"/>
    <property type="match status" value="1"/>
</dbReference>
<dbReference type="NCBIfam" id="NF008727">
    <property type="entry name" value="PRK11730.1"/>
    <property type="match status" value="1"/>
</dbReference>
<dbReference type="PANTHER" id="PTHR43612">
    <property type="entry name" value="TRIFUNCTIONAL ENZYME SUBUNIT ALPHA"/>
    <property type="match status" value="1"/>
</dbReference>
<dbReference type="PANTHER" id="PTHR43612:SF3">
    <property type="entry name" value="TRIFUNCTIONAL ENZYME SUBUNIT ALPHA, MITOCHONDRIAL"/>
    <property type="match status" value="1"/>
</dbReference>
<dbReference type="Pfam" id="PF00725">
    <property type="entry name" value="3HCDH"/>
    <property type="match status" value="2"/>
</dbReference>
<dbReference type="Pfam" id="PF02737">
    <property type="entry name" value="3HCDH_N"/>
    <property type="match status" value="1"/>
</dbReference>
<dbReference type="Pfam" id="PF00378">
    <property type="entry name" value="ECH_1"/>
    <property type="match status" value="1"/>
</dbReference>
<dbReference type="SUPFAM" id="SSF48179">
    <property type="entry name" value="6-phosphogluconate dehydrogenase C-terminal domain-like"/>
    <property type="match status" value="2"/>
</dbReference>
<dbReference type="SUPFAM" id="SSF52096">
    <property type="entry name" value="ClpP/crotonase"/>
    <property type="match status" value="1"/>
</dbReference>
<dbReference type="SUPFAM" id="SSF51735">
    <property type="entry name" value="NAD(P)-binding Rossmann-fold domains"/>
    <property type="match status" value="1"/>
</dbReference>
<dbReference type="PROSITE" id="PS00067">
    <property type="entry name" value="3HCDH"/>
    <property type="match status" value="1"/>
</dbReference>
<dbReference type="PROSITE" id="PS00166">
    <property type="entry name" value="ENOYL_COA_HYDRATASE"/>
    <property type="match status" value="1"/>
</dbReference>
<keyword id="KW-0276">Fatty acid metabolism</keyword>
<keyword id="KW-0413">Isomerase</keyword>
<keyword id="KW-0442">Lipid degradation</keyword>
<keyword id="KW-0443">Lipid metabolism</keyword>
<keyword id="KW-0456">Lyase</keyword>
<keyword id="KW-0511">Multifunctional enzyme</keyword>
<keyword id="KW-0520">NAD</keyword>
<keyword id="KW-0560">Oxidoreductase</keyword>
<proteinExistence type="inferred from homology"/>
<sequence length="729" mass="79559">MLYKGDTLYLDWLEDGIAELVFDAPGSVNKLDTATVASLGEAIGVLEQQSDLKGLLLRSNKAAFIVGADITEFLSLFLVPEEQLSQWLHFANSVFNRLEDLPVPTIAAVNGYALGGGCECVLATDYRLATPDLRIGLPETKLGIMPGFGGSVRMPRMLGADSALEIIAAGKDVGADQALKIGLVDGVVKAEKLIEGAMAILRQAINGDLDWKAKRQPKLEPLKLSKIEATMSFTIAKGMVAQTAGKHYPAPITAVKTIEAAARFGREEALNLENKSFVPLAHTNEARALVGIFLNDQYVKGKAKKLTKDVETPKQAAVLGAGIMGGGIAYQSAWKGVPVIMKDINDKSLALGMTEAAKLLNKQLERGKIDGLKLAGVISTIHPTLDYAGFERVDVVVEAIVENPKVKKAVLAETEQKVRPDTVLASNTSTIPISELANALERPENFCGMHFFNPVHRMPLVEIIRGEKSSDETIAKVVAWASKMGKTPIVVNDCPGFFVNRVLFPYFAGFSQLLRDGADFRKIDKVMEKQFGWPMGPAYLLDVVGIDTAHHAQAVMAAGFPQRMQKDYRDAIDALFDANRFGQKNGLGFWHYKEDSKGKPKKEEDAAVDDLLAEVSQPKRDFSEEEIIARMMIPMVNEVVRCLEEGIIATPAEADMALVYGLGFPPFHGGAFRWLDTLGSAKYLDMAQQYQHLGPLYEVPEGLRNKARHNEPYYPPVEPARPVGDLKTA</sequence>
<accession>B5YY93</accession>
<feature type="chain" id="PRO_1000186035" description="Fatty acid oxidation complex subunit alpha">
    <location>
        <begin position="1"/>
        <end position="729"/>
    </location>
</feature>
<feature type="region of interest" description="Enoyl-CoA hydratase/isomerase" evidence="1">
    <location>
        <begin position="1"/>
        <end position="189"/>
    </location>
</feature>
<feature type="region of interest" description="3-hydroxyacyl-CoA dehydrogenase" evidence="1">
    <location>
        <begin position="311"/>
        <end position="729"/>
    </location>
</feature>
<feature type="region of interest" description="Disordered" evidence="2">
    <location>
        <begin position="708"/>
        <end position="729"/>
    </location>
</feature>
<feature type="active site" description="For 3-hydroxyacyl-CoA dehydrogenase activity" evidence="1">
    <location>
        <position position="450"/>
    </location>
</feature>
<feature type="binding site" evidence="1">
    <location>
        <position position="296"/>
    </location>
    <ligand>
        <name>substrate</name>
    </ligand>
</feature>
<feature type="binding site" evidence="1">
    <location>
        <position position="324"/>
    </location>
    <ligand>
        <name>NAD(+)</name>
        <dbReference type="ChEBI" id="CHEBI:57540"/>
    </ligand>
</feature>
<feature type="binding site" evidence="1">
    <location>
        <position position="343"/>
    </location>
    <ligand>
        <name>NAD(+)</name>
        <dbReference type="ChEBI" id="CHEBI:57540"/>
    </ligand>
</feature>
<feature type="binding site" evidence="1">
    <location>
        <begin position="400"/>
        <end position="402"/>
    </location>
    <ligand>
        <name>NAD(+)</name>
        <dbReference type="ChEBI" id="CHEBI:57540"/>
    </ligand>
</feature>
<feature type="binding site" evidence="1">
    <location>
        <position position="407"/>
    </location>
    <ligand>
        <name>NAD(+)</name>
        <dbReference type="ChEBI" id="CHEBI:57540"/>
    </ligand>
</feature>
<feature type="binding site" evidence="1">
    <location>
        <position position="429"/>
    </location>
    <ligand>
        <name>NAD(+)</name>
        <dbReference type="ChEBI" id="CHEBI:57540"/>
    </ligand>
</feature>
<feature type="binding site" evidence="1">
    <location>
        <position position="453"/>
    </location>
    <ligand>
        <name>NAD(+)</name>
        <dbReference type="ChEBI" id="CHEBI:57540"/>
    </ligand>
</feature>
<feature type="binding site" evidence="1">
    <location>
        <position position="500"/>
    </location>
    <ligand>
        <name>substrate</name>
    </ligand>
</feature>
<feature type="binding site" evidence="1">
    <location>
        <position position="660"/>
    </location>
    <ligand>
        <name>substrate</name>
    </ligand>
</feature>
<feature type="site" description="Important for catalytic activity" evidence="1">
    <location>
        <position position="119"/>
    </location>
</feature>
<feature type="site" description="Important for catalytic activity" evidence="1">
    <location>
        <position position="139"/>
    </location>
</feature>
<protein>
    <recommendedName>
        <fullName evidence="1">Fatty acid oxidation complex subunit alpha</fullName>
    </recommendedName>
    <domain>
        <recommendedName>
            <fullName evidence="1">Enoyl-CoA hydratase/Delta(3)-cis-Delta(2)-trans-enoyl-CoA isomerase/3-hydroxybutyryl-CoA epimerase</fullName>
            <ecNumber evidence="1">4.2.1.17</ecNumber>
            <ecNumber evidence="1">5.1.2.3</ecNumber>
            <ecNumber evidence="1">5.3.3.8</ecNumber>
        </recommendedName>
    </domain>
    <domain>
        <recommendedName>
            <fullName evidence="1">3-hydroxyacyl-CoA dehydrogenase</fullName>
            <ecNumber evidence="1">1.1.1.35</ecNumber>
        </recommendedName>
    </domain>
</protein>
<reference key="1">
    <citation type="journal article" date="2011" name="Proc. Natl. Acad. Sci. U.S.A.">
        <title>Genomic anatomy of Escherichia coli O157:H7 outbreaks.</title>
        <authorList>
            <person name="Eppinger M."/>
            <person name="Mammel M.K."/>
            <person name="Leclerc J.E."/>
            <person name="Ravel J."/>
            <person name="Cebula T.A."/>
        </authorList>
    </citation>
    <scope>NUCLEOTIDE SEQUENCE [LARGE SCALE GENOMIC DNA]</scope>
    <source>
        <strain>EC4115 / EHEC</strain>
    </source>
</reference>
<organism>
    <name type="scientific">Escherichia coli O157:H7 (strain EC4115 / EHEC)</name>
    <dbReference type="NCBI Taxonomy" id="444450"/>
    <lineage>
        <taxon>Bacteria</taxon>
        <taxon>Pseudomonadati</taxon>
        <taxon>Pseudomonadota</taxon>
        <taxon>Gammaproteobacteria</taxon>
        <taxon>Enterobacterales</taxon>
        <taxon>Enterobacteriaceae</taxon>
        <taxon>Escherichia</taxon>
    </lineage>
</organism>
<comment type="function">
    <text evidence="1">Involved in the aerobic and anaerobic degradation of long-chain fatty acids via beta-oxidation cycle. Catalyzes the formation of 3-oxoacyl-CoA from enoyl-CoA via L-3-hydroxyacyl-CoA. It can also use D-3-hydroxyacyl-CoA and cis-3-enoyl-CoA as substrate.</text>
</comment>
<comment type="catalytic activity">
    <reaction evidence="1">
        <text>a (3S)-3-hydroxyacyl-CoA + NAD(+) = a 3-oxoacyl-CoA + NADH + H(+)</text>
        <dbReference type="Rhea" id="RHEA:22432"/>
        <dbReference type="ChEBI" id="CHEBI:15378"/>
        <dbReference type="ChEBI" id="CHEBI:57318"/>
        <dbReference type="ChEBI" id="CHEBI:57540"/>
        <dbReference type="ChEBI" id="CHEBI:57945"/>
        <dbReference type="ChEBI" id="CHEBI:90726"/>
        <dbReference type="EC" id="1.1.1.35"/>
    </reaction>
</comment>
<comment type="catalytic activity">
    <reaction evidence="1">
        <text>a (3S)-3-hydroxyacyl-CoA = a (2E)-enoyl-CoA + H2O</text>
        <dbReference type="Rhea" id="RHEA:16105"/>
        <dbReference type="ChEBI" id="CHEBI:15377"/>
        <dbReference type="ChEBI" id="CHEBI:57318"/>
        <dbReference type="ChEBI" id="CHEBI:58856"/>
        <dbReference type="EC" id="4.2.1.17"/>
    </reaction>
</comment>
<comment type="catalytic activity">
    <reaction evidence="1">
        <text>a 4-saturated-(3S)-3-hydroxyacyl-CoA = a (3E)-enoyl-CoA + H2O</text>
        <dbReference type="Rhea" id="RHEA:20724"/>
        <dbReference type="ChEBI" id="CHEBI:15377"/>
        <dbReference type="ChEBI" id="CHEBI:58521"/>
        <dbReference type="ChEBI" id="CHEBI:137480"/>
        <dbReference type="EC" id="4.2.1.17"/>
    </reaction>
</comment>
<comment type="catalytic activity">
    <reaction evidence="1">
        <text>(3S)-3-hydroxybutanoyl-CoA = (3R)-3-hydroxybutanoyl-CoA</text>
        <dbReference type="Rhea" id="RHEA:21760"/>
        <dbReference type="ChEBI" id="CHEBI:57315"/>
        <dbReference type="ChEBI" id="CHEBI:57316"/>
        <dbReference type="EC" id="5.1.2.3"/>
    </reaction>
</comment>
<comment type="catalytic activity">
    <reaction evidence="1">
        <text>a (3Z)-enoyl-CoA = a 4-saturated (2E)-enoyl-CoA</text>
        <dbReference type="Rhea" id="RHEA:45900"/>
        <dbReference type="ChEBI" id="CHEBI:85097"/>
        <dbReference type="ChEBI" id="CHEBI:85489"/>
        <dbReference type="EC" id="5.3.3.8"/>
    </reaction>
</comment>
<comment type="catalytic activity">
    <reaction evidence="1">
        <text>a (3E)-enoyl-CoA = a 4-saturated (2E)-enoyl-CoA</text>
        <dbReference type="Rhea" id="RHEA:45228"/>
        <dbReference type="ChEBI" id="CHEBI:58521"/>
        <dbReference type="ChEBI" id="CHEBI:85097"/>
        <dbReference type="EC" id="5.3.3.8"/>
    </reaction>
</comment>
<comment type="pathway">
    <text evidence="1">Lipid metabolism; fatty acid beta-oxidation.</text>
</comment>
<comment type="subunit">
    <text evidence="1">Heterotetramer of two alpha chains (FadB) and two beta chains (FadA).</text>
</comment>
<comment type="similarity">
    <text evidence="1">In the N-terminal section; belongs to the enoyl-CoA hydratase/isomerase family.</text>
</comment>
<comment type="similarity">
    <text evidence="1">In the C-terminal section; belongs to the 3-hydroxyacyl-CoA dehydrogenase family.</text>
</comment>
<gene>
    <name evidence="1" type="primary">fadB</name>
    <name type="ordered locus">ECH74115_5285</name>
</gene>
<name>FADB_ECO5E</name>